<dbReference type="EMBL" id="AL111168">
    <property type="protein sequence ID" value="CAL35319.1"/>
    <property type="molecule type" value="Genomic_DNA"/>
</dbReference>
<dbReference type="PIR" id="F81326">
    <property type="entry name" value="F81326"/>
</dbReference>
<dbReference type="RefSeq" id="WP_002858390.1">
    <property type="nucleotide sequence ID" value="NZ_SZUC01000001.1"/>
</dbReference>
<dbReference type="RefSeq" id="YP_002344595.1">
    <property type="nucleotide sequence ID" value="NC_002163.1"/>
</dbReference>
<dbReference type="SMR" id="Q0P952"/>
<dbReference type="IntAct" id="Q0P952">
    <property type="interactions" value="6"/>
</dbReference>
<dbReference type="STRING" id="192222.Cj1204c"/>
<dbReference type="PaxDb" id="192222-Cj1204c"/>
<dbReference type="EnsemblBacteria" id="CAL35319">
    <property type="protein sequence ID" value="CAL35319"/>
    <property type="gene ID" value="Cj1204c"/>
</dbReference>
<dbReference type="GeneID" id="905494"/>
<dbReference type="KEGG" id="cje:Cj1204c"/>
<dbReference type="PATRIC" id="fig|192222.6.peg.1185"/>
<dbReference type="eggNOG" id="COG0356">
    <property type="taxonomic scope" value="Bacteria"/>
</dbReference>
<dbReference type="HOGENOM" id="CLU_041018_2_2_7"/>
<dbReference type="OrthoDB" id="9789241at2"/>
<dbReference type="Proteomes" id="UP000000799">
    <property type="component" value="Chromosome"/>
</dbReference>
<dbReference type="GO" id="GO:0005886">
    <property type="term" value="C:plasma membrane"/>
    <property type="evidence" value="ECO:0007669"/>
    <property type="project" value="UniProtKB-SubCell"/>
</dbReference>
<dbReference type="GO" id="GO:0045259">
    <property type="term" value="C:proton-transporting ATP synthase complex"/>
    <property type="evidence" value="ECO:0007669"/>
    <property type="project" value="UniProtKB-KW"/>
</dbReference>
<dbReference type="GO" id="GO:0046933">
    <property type="term" value="F:proton-transporting ATP synthase activity, rotational mechanism"/>
    <property type="evidence" value="ECO:0007669"/>
    <property type="project" value="UniProtKB-UniRule"/>
</dbReference>
<dbReference type="GO" id="GO:0042777">
    <property type="term" value="P:proton motive force-driven plasma membrane ATP synthesis"/>
    <property type="evidence" value="ECO:0007669"/>
    <property type="project" value="TreeGrafter"/>
</dbReference>
<dbReference type="CDD" id="cd00310">
    <property type="entry name" value="ATP-synt_Fo_a_6"/>
    <property type="match status" value="1"/>
</dbReference>
<dbReference type="FunFam" id="1.20.120.220:FF:000006">
    <property type="entry name" value="ATP synthase subunit a"/>
    <property type="match status" value="1"/>
</dbReference>
<dbReference type="Gene3D" id="1.20.120.220">
    <property type="entry name" value="ATP synthase, F0 complex, subunit A"/>
    <property type="match status" value="1"/>
</dbReference>
<dbReference type="HAMAP" id="MF_01393">
    <property type="entry name" value="ATP_synth_a_bact"/>
    <property type="match status" value="1"/>
</dbReference>
<dbReference type="InterPro" id="IPR045082">
    <property type="entry name" value="ATP_syn_F0_a_bact/chloroplast"/>
</dbReference>
<dbReference type="InterPro" id="IPR000568">
    <property type="entry name" value="ATP_synth_F0_asu"/>
</dbReference>
<dbReference type="InterPro" id="IPR023011">
    <property type="entry name" value="ATP_synth_F0_asu_AS"/>
</dbReference>
<dbReference type="InterPro" id="IPR035908">
    <property type="entry name" value="F0_ATP_A_sf"/>
</dbReference>
<dbReference type="NCBIfam" id="TIGR01131">
    <property type="entry name" value="ATP_synt_6_or_A"/>
    <property type="match status" value="1"/>
</dbReference>
<dbReference type="NCBIfam" id="NF004481">
    <property type="entry name" value="PRK05815.2-3"/>
    <property type="match status" value="1"/>
</dbReference>
<dbReference type="PANTHER" id="PTHR42823">
    <property type="entry name" value="ATP SYNTHASE SUBUNIT A, CHLOROPLASTIC"/>
    <property type="match status" value="1"/>
</dbReference>
<dbReference type="PANTHER" id="PTHR42823:SF3">
    <property type="entry name" value="ATP SYNTHASE SUBUNIT A, CHLOROPLASTIC"/>
    <property type="match status" value="1"/>
</dbReference>
<dbReference type="Pfam" id="PF00119">
    <property type="entry name" value="ATP-synt_A"/>
    <property type="match status" value="1"/>
</dbReference>
<dbReference type="PRINTS" id="PR00123">
    <property type="entry name" value="ATPASEA"/>
</dbReference>
<dbReference type="SUPFAM" id="SSF81336">
    <property type="entry name" value="F1F0 ATP synthase subunit A"/>
    <property type="match status" value="1"/>
</dbReference>
<dbReference type="PROSITE" id="PS00449">
    <property type="entry name" value="ATPASE_A"/>
    <property type="match status" value="1"/>
</dbReference>
<keyword id="KW-0066">ATP synthesis</keyword>
<keyword id="KW-0997">Cell inner membrane</keyword>
<keyword id="KW-1003">Cell membrane</keyword>
<keyword id="KW-0138">CF(0)</keyword>
<keyword id="KW-0375">Hydrogen ion transport</keyword>
<keyword id="KW-0406">Ion transport</keyword>
<keyword id="KW-0472">Membrane</keyword>
<keyword id="KW-1185">Reference proteome</keyword>
<keyword id="KW-0812">Transmembrane</keyword>
<keyword id="KW-1133">Transmembrane helix</keyword>
<keyword id="KW-0813">Transport</keyword>
<protein>
    <recommendedName>
        <fullName evidence="1">ATP synthase subunit a</fullName>
    </recommendedName>
    <alternativeName>
        <fullName evidence="1">ATP synthase F0 sector subunit a</fullName>
    </alternativeName>
    <alternativeName>
        <fullName evidence="1">F-ATPase subunit 6</fullName>
    </alternativeName>
</protein>
<reference key="1">
    <citation type="journal article" date="2000" name="Nature">
        <title>The genome sequence of the food-borne pathogen Campylobacter jejuni reveals hypervariable sequences.</title>
        <authorList>
            <person name="Parkhill J."/>
            <person name="Wren B.W."/>
            <person name="Mungall K.L."/>
            <person name="Ketley J.M."/>
            <person name="Churcher C.M."/>
            <person name="Basham D."/>
            <person name="Chillingworth T."/>
            <person name="Davies R.M."/>
            <person name="Feltwell T."/>
            <person name="Holroyd S."/>
            <person name="Jagels K."/>
            <person name="Karlyshev A.V."/>
            <person name="Moule S."/>
            <person name="Pallen M.J."/>
            <person name="Penn C.W."/>
            <person name="Quail M.A."/>
            <person name="Rajandream M.A."/>
            <person name="Rutherford K.M."/>
            <person name="van Vliet A.H.M."/>
            <person name="Whitehead S."/>
            <person name="Barrell B.G."/>
        </authorList>
    </citation>
    <scope>NUCLEOTIDE SEQUENCE [LARGE SCALE GENOMIC DNA]</scope>
    <source>
        <strain>ATCC 700819 / NCTC 11168</strain>
    </source>
</reference>
<proteinExistence type="inferred from homology"/>
<feature type="chain" id="PRO_0000362264" description="ATP synthase subunit a">
    <location>
        <begin position="1"/>
        <end position="226"/>
    </location>
</feature>
<feature type="transmembrane region" description="Helical" evidence="1">
    <location>
        <begin position="17"/>
        <end position="37"/>
    </location>
</feature>
<feature type="transmembrane region" description="Helical" evidence="1">
    <location>
        <begin position="79"/>
        <end position="99"/>
    </location>
</feature>
<feature type="transmembrane region" description="Helical" evidence="1">
    <location>
        <begin position="105"/>
        <end position="125"/>
    </location>
</feature>
<feature type="transmembrane region" description="Helical" evidence="1">
    <location>
        <begin position="134"/>
        <end position="154"/>
    </location>
</feature>
<feature type="transmembrane region" description="Helical" evidence="1">
    <location>
        <begin position="176"/>
        <end position="196"/>
    </location>
</feature>
<feature type="transmembrane region" description="Helical" evidence="1">
    <location>
        <begin position="199"/>
        <end position="219"/>
    </location>
</feature>
<evidence type="ECO:0000255" key="1">
    <source>
        <dbReference type="HAMAP-Rule" id="MF_01393"/>
    </source>
</evidence>
<name>ATP6_CAMJE</name>
<gene>
    <name evidence="1" type="primary">atpB</name>
    <name type="ordered locus">Cj1204c</name>
</gene>
<sequence length="226" mass="25013">MKDLFLFSSLLDASHTFSYFFHIGLVALIAVIVAMMATRSMQLVPRGMQNLGEAFLEGVLSMGRDTMGSEKGARKYLPLVATLGIIVFFSNIIGIIPGFHAPTASLNLTLSLAIIVFVYYHFEGIRAQGFVKYFAHFMGPIKLLAPLMFPIEIVSHLSRVVSLSFRLFGNIKGDDLFLMVILALVPYIAPLPAYVLLTFMAFLQAFIFMILTYVYLAGATVVEEGH</sequence>
<accession>Q0P952</accession>
<organism>
    <name type="scientific">Campylobacter jejuni subsp. jejuni serotype O:2 (strain ATCC 700819 / NCTC 11168)</name>
    <dbReference type="NCBI Taxonomy" id="192222"/>
    <lineage>
        <taxon>Bacteria</taxon>
        <taxon>Pseudomonadati</taxon>
        <taxon>Campylobacterota</taxon>
        <taxon>Epsilonproteobacteria</taxon>
        <taxon>Campylobacterales</taxon>
        <taxon>Campylobacteraceae</taxon>
        <taxon>Campylobacter</taxon>
    </lineage>
</organism>
<comment type="function">
    <text evidence="1">Key component of the proton channel; it plays a direct role in the translocation of protons across the membrane.</text>
</comment>
<comment type="subunit">
    <text evidence="1">F-type ATPases have 2 components, CF(1) - the catalytic core - and CF(0) - the membrane proton channel. CF(1) has five subunits: alpha(3), beta(3), gamma(1), delta(1), epsilon(1). CF(0) has three main subunits: a(1), b(2) and c(9-12). The alpha and beta chains form an alternating ring which encloses part of the gamma chain. CF(1) is attached to CF(0) by a central stalk formed by the gamma and epsilon chains, while a peripheral stalk is formed by the delta and b chains.</text>
</comment>
<comment type="subcellular location">
    <subcellularLocation>
        <location evidence="1">Cell inner membrane</location>
        <topology evidence="1">Multi-pass membrane protein</topology>
    </subcellularLocation>
</comment>
<comment type="similarity">
    <text evidence="1">Belongs to the ATPase A chain family.</text>
</comment>